<dbReference type="EMBL" id="AF189315">
    <property type="protein sequence ID" value="AAF00510.1"/>
    <property type="molecule type" value="Genomic_DNA"/>
</dbReference>
<dbReference type="EMBL" id="AF189314">
    <property type="protein sequence ID" value="AAF00510.1"/>
    <property type="status" value="JOINED"/>
    <property type="molecule type" value="Genomic_DNA"/>
</dbReference>
<dbReference type="SMR" id="Q9QYR2"/>
<dbReference type="GO" id="GO:0005634">
    <property type="term" value="C:nucleus"/>
    <property type="evidence" value="ECO:0007669"/>
    <property type="project" value="UniProtKB-SubCell"/>
</dbReference>
<dbReference type="GO" id="GO:0003677">
    <property type="term" value="F:DNA binding"/>
    <property type="evidence" value="ECO:0007669"/>
    <property type="project" value="UniProtKB-KW"/>
</dbReference>
<dbReference type="GO" id="GO:0030154">
    <property type="term" value="P:cell differentiation"/>
    <property type="evidence" value="ECO:0007669"/>
    <property type="project" value="UniProtKB-KW"/>
</dbReference>
<dbReference type="Gene3D" id="1.10.10.60">
    <property type="entry name" value="Homeodomain-like"/>
    <property type="match status" value="1"/>
</dbReference>
<dbReference type="InterPro" id="IPR001356">
    <property type="entry name" value="HD"/>
</dbReference>
<dbReference type="PANTHER" id="PTHR47465:SF6">
    <property type="entry name" value="HOMEOBOX PROTEIN RHOX5"/>
    <property type="match status" value="1"/>
</dbReference>
<dbReference type="PANTHER" id="PTHR47465">
    <property type="entry name" value="MCG113260-RELATED-RELATED"/>
    <property type="match status" value="1"/>
</dbReference>
<dbReference type="SMART" id="SM00389">
    <property type="entry name" value="HOX"/>
    <property type="match status" value="1"/>
</dbReference>
<name>RHOX5_MUSMI</name>
<comment type="function">
    <text evidence="1">Transcription factor required for differentiation of embryonic stem cells (ESCs) into primordial germ cells.</text>
</comment>
<comment type="subcellular location">
    <subcellularLocation>
        <location evidence="3">Nucleus</location>
    </subcellularLocation>
</comment>
<keyword id="KW-0221">Differentiation</keyword>
<keyword id="KW-0238">DNA-binding</keyword>
<keyword id="KW-0371">Homeobox</keyword>
<keyword id="KW-0539">Nucleus</keyword>
<sequence>MEAQSSSRQVTGPLYLGVKEDWEEQHDVKAEAFLQAGEGRKEKGAQGQPGVGAVGKEGEGEELSGGEGQFGPGAPGPMGDEDKDGGTRAGGVEEEQNEPAAEGTESQKNGKPEDRQMPLQGSRFAQQRLSELQSILQRTNSFDVPREDLYRLMDTCVARVQNWFKIRRAAARRNRRRTTPVPEHFRGTFECPACRGVRWGERCPFATPRF</sequence>
<proteinExistence type="inferred from homology"/>
<protein>
    <recommendedName>
        <fullName>Homeobox protein Rhox5</fullName>
    </recommendedName>
    <alternativeName>
        <fullName>Homeobox protein Pem</fullName>
    </alternativeName>
    <alternativeName>
        <fullName>Placenta and embryonic expression protein</fullName>
    </alternativeName>
    <alternativeName>
        <fullName>Reproductive homeobox on chromosome X 5</fullName>
    </alternativeName>
</protein>
<accession>Q9QYR2</accession>
<gene>
    <name type="primary">Rhox5</name>
    <name type="synonym">Pem</name>
</gene>
<evidence type="ECO:0000250" key="1">
    <source>
        <dbReference type="UniProtKB" id="P52651"/>
    </source>
</evidence>
<evidence type="ECO:0000256" key="2">
    <source>
        <dbReference type="SAM" id="MobiDB-lite"/>
    </source>
</evidence>
<evidence type="ECO:0000305" key="3"/>
<feature type="chain" id="PRO_0000257864" description="Homeobox protein Rhox5">
    <location>
        <begin position="1"/>
        <end position="210"/>
    </location>
</feature>
<feature type="DNA-binding region" description="Homeobox; atypical">
    <location>
        <begin position="117"/>
        <end position="175"/>
    </location>
</feature>
<feature type="region of interest" description="Disordered" evidence="2">
    <location>
        <begin position="29"/>
        <end position="117"/>
    </location>
</feature>
<reference key="1">
    <citation type="journal article" date="1997" name="J. Mol. Evol.">
        <title>Rapid evolution of a homeodomain: evidence for positive selection.</title>
        <authorList>
            <person name="Sutton K.A."/>
            <person name="Wilkinson M.F."/>
        </authorList>
    </citation>
    <scope>NUCLEOTIDE SEQUENCE [GENOMIC DNA]</scope>
</reference>
<organism>
    <name type="scientific">Mus minutoides</name>
    <name type="common">Southern African pygmy mouse</name>
    <dbReference type="NCBI Taxonomy" id="10105"/>
    <lineage>
        <taxon>Eukaryota</taxon>
        <taxon>Metazoa</taxon>
        <taxon>Chordata</taxon>
        <taxon>Craniata</taxon>
        <taxon>Vertebrata</taxon>
        <taxon>Euteleostomi</taxon>
        <taxon>Mammalia</taxon>
        <taxon>Eutheria</taxon>
        <taxon>Euarchontoglires</taxon>
        <taxon>Glires</taxon>
        <taxon>Rodentia</taxon>
        <taxon>Myomorpha</taxon>
        <taxon>Muroidea</taxon>
        <taxon>Muridae</taxon>
        <taxon>Murinae</taxon>
        <taxon>Mus</taxon>
        <taxon>Nannomys</taxon>
    </lineage>
</organism>